<evidence type="ECO:0000255" key="1">
    <source>
        <dbReference type="HAMAP-Rule" id="MF_00239"/>
    </source>
</evidence>
<dbReference type="EC" id="2.7.4.25" evidence="1"/>
<dbReference type="EMBL" id="CP000678">
    <property type="protein sequence ID" value="ABQ86939.1"/>
    <property type="molecule type" value="Genomic_DNA"/>
</dbReference>
<dbReference type="RefSeq" id="WP_004033247.1">
    <property type="nucleotide sequence ID" value="NZ_CP117965.1"/>
</dbReference>
<dbReference type="SMR" id="A5UL61"/>
<dbReference type="STRING" id="420247.Msm_0734"/>
<dbReference type="EnsemblBacteria" id="ABQ86939">
    <property type="protein sequence ID" value="ABQ86939"/>
    <property type="gene ID" value="Msm_0734"/>
</dbReference>
<dbReference type="GeneID" id="78817363"/>
<dbReference type="KEGG" id="msi:Msm_0734"/>
<dbReference type="PATRIC" id="fig|420247.28.peg.731"/>
<dbReference type="eggNOG" id="arCOG01037">
    <property type="taxonomic scope" value="Archaea"/>
</dbReference>
<dbReference type="HOGENOM" id="CLU_079959_1_0_2"/>
<dbReference type="Proteomes" id="UP000001992">
    <property type="component" value="Chromosome"/>
</dbReference>
<dbReference type="GO" id="GO:0005737">
    <property type="term" value="C:cytoplasm"/>
    <property type="evidence" value="ECO:0007669"/>
    <property type="project" value="UniProtKB-SubCell"/>
</dbReference>
<dbReference type="GO" id="GO:0005524">
    <property type="term" value="F:ATP binding"/>
    <property type="evidence" value="ECO:0007669"/>
    <property type="project" value="UniProtKB-UniRule"/>
</dbReference>
<dbReference type="GO" id="GO:0036430">
    <property type="term" value="F:CMP kinase activity"/>
    <property type="evidence" value="ECO:0007669"/>
    <property type="project" value="RHEA"/>
</dbReference>
<dbReference type="GO" id="GO:0036431">
    <property type="term" value="F:dCMP kinase activity"/>
    <property type="evidence" value="ECO:0007669"/>
    <property type="project" value="RHEA"/>
</dbReference>
<dbReference type="GO" id="GO:0006220">
    <property type="term" value="P:pyrimidine nucleotide metabolic process"/>
    <property type="evidence" value="ECO:0007669"/>
    <property type="project" value="UniProtKB-UniRule"/>
</dbReference>
<dbReference type="CDD" id="cd02020">
    <property type="entry name" value="CMPK"/>
    <property type="match status" value="1"/>
</dbReference>
<dbReference type="Gene3D" id="3.40.50.300">
    <property type="entry name" value="P-loop containing nucleotide triphosphate hydrolases"/>
    <property type="match status" value="1"/>
</dbReference>
<dbReference type="HAMAP" id="MF_00239">
    <property type="entry name" value="Cytidyl_kinase_type2"/>
    <property type="match status" value="1"/>
</dbReference>
<dbReference type="InterPro" id="IPR011892">
    <property type="entry name" value="Cyt_kin_arch"/>
</dbReference>
<dbReference type="InterPro" id="IPR011994">
    <property type="entry name" value="Cytidylate_kinase_dom"/>
</dbReference>
<dbReference type="InterPro" id="IPR027417">
    <property type="entry name" value="P-loop_NTPase"/>
</dbReference>
<dbReference type="NCBIfam" id="TIGR02173">
    <property type="entry name" value="cyt_kin_arch"/>
    <property type="match status" value="1"/>
</dbReference>
<dbReference type="Pfam" id="PF13189">
    <property type="entry name" value="Cytidylate_kin2"/>
    <property type="match status" value="1"/>
</dbReference>
<dbReference type="SUPFAM" id="SSF52540">
    <property type="entry name" value="P-loop containing nucleoside triphosphate hydrolases"/>
    <property type="match status" value="1"/>
</dbReference>
<keyword id="KW-0067">ATP-binding</keyword>
<keyword id="KW-0963">Cytoplasm</keyword>
<keyword id="KW-0418">Kinase</keyword>
<keyword id="KW-0547">Nucleotide-binding</keyword>
<keyword id="KW-0808">Transferase</keyword>
<sequence length="172" mass="19189">MIITVGGLAGTGTTTTAELLSEKLGIPFVSSGSIFRAMAEEKGMSVLEFSEFAESNDNIDKEIDKRQAELAKSSENLILEGRLSAYFVEADLKLWLMAPLDVRAQRISQRESKSVDVAKEEIKIREESEALRYLDIHNIDISNLDIYDLMINTDSFDPESITKIILTTLKVI</sequence>
<proteinExistence type="inferred from homology"/>
<name>KCY_METS3</name>
<organism>
    <name type="scientific">Methanobrevibacter smithii (strain ATCC 35061 / DSM 861 / OCM 144 / PS)</name>
    <dbReference type="NCBI Taxonomy" id="420247"/>
    <lineage>
        <taxon>Archaea</taxon>
        <taxon>Methanobacteriati</taxon>
        <taxon>Methanobacteriota</taxon>
        <taxon>Methanomada group</taxon>
        <taxon>Methanobacteria</taxon>
        <taxon>Methanobacteriales</taxon>
        <taxon>Methanobacteriaceae</taxon>
        <taxon>Methanobrevibacter</taxon>
    </lineage>
</organism>
<gene>
    <name evidence="1" type="primary">cmk</name>
    <name type="ordered locus">Msm_0734</name>
</gene>
<reference key="1">
    <citation type="journal article" date="2007" name="Proc. Natl. Acad. Sci. U.S.A.">
        <title>Genomic and metabolic adaptations of Methanobrevibacter smithii to the human gut.</title>
        <authorList>
            <person name="Samuel B.S."/>
            <person name="Hansen E.E."/>
            <person name="Manchester J.K."/>
            <person name="Coutinho P.M."/>
            <person name="Henrissat B."/>
            <person name="Fulton R."/>
            <person name="Latreille P."/>
            <person name="Kim K."/>
            <person name="Wilson R.K."/>
            <person name="Gordon J.I."/>
        </authorList>
    </citation>
    <scope>NUCLEOTIDE SEQUENCE [LARGE SCALE GENOMIC DNA]</scope>
    <source>
        <strain>ATCC 35061 / DSM 861 / OCM 144 / PS</strain>
    </source>
</reference>
<feature type="chain" id="PRO_1000005678" description="Cytidylate kinase">
    <location>
        <begin position="1"/>
        <end position="172"/>
    </location>
</feature>
<feature type="binding site" evidence="1">
    <location>
        <begin position="7"/>
        <end position="15"/>
    </location>
    <ligand>
        <name>ATP</name>
        <dbReference type="ChEBI" id="CHEBI:30616"/>
    </ligand>
</feature>
<comment type="catalytic activity">
    <reaction evidence="1">
        <text>CMP + ATP = CDP + ADP</text>
        <dbReference type="Rhea" id="RHEA:11600"/>
        <dbReference type="ChEBI" id="CHEBI:30616"/>
        <dbReference type="ChEBI" id="CHEBI:58069"/>
        <dbReference type="ChEBI" id="CHEBI:60377"/>
        <dbReference type="ChEBI" id="CHEBI:456216"/>
        <dbReference type="EC" id="2.7.4.25"/>
    </reaction>
</comment>
<comment type="catalytic activity">
    <reaction evidence="1">
        <text>dCMP + ATP = dCDP + ADP</text>
        <dbReference type="Rhea" id="RHEA:25094"/>
        <dbReference type="ChEBI" id="CHEBI:30616"/>
        <dbReference type="ChEBI" id="CHEBI:57566"/>
        <dbReference type="ChEBI" id="CHEBI:58593"/>
        <dbReference type="ChEBI" id="CHEBI:456216"/>
        <dbReference type="EC" id="2.7.4.25"/>
    </reaction>
</comment>
<comment type="subcellular location">
    <subcellularLocation>
        <location evidence="1">Cytoplasm</location>
    </subcellularLocation>
</comment>
<comment type="similarity">
    <text evidence="1">Belongs to the cytidylate kinase family. Type 2 subfamily.</text>
</comment>
<accession>A5UL61</accession>
<protein>
    <recommendedName>
        <fullName evidence="1">Cytidylate kinase</fullName>
        <shortName evidence="1">CK</shortName>
        <ecNumber evidence="1">2.7.4.25</ecNumber>
    </recommendedName>
    <alternativeName>
        <fullName evidence="1">Cytidine monophosphate kinase</fullName>
        <shortName evidence="1">CMP kinase</shortName>
    </alternativeName>
</protein>